<gene>
    <name evidence="1" type="primary">gpt</name>
    <name type="ordered locus">YPN_0868</name>
    <name type="ORF">YP516_0939</name>
</gene>
<feature type="chain" id="PRO_0000261024" description="Xanthine-guanine phosphoribosyltransferase">
    <location>
        <begin position="1"/>
        <end position="152"/>
    </location>
</feature>
<feature type="binding site" evidence="1">
    <location>
        <begin position="37"/>
        <end position="38"/>
    </location>
    <ligand>
        <name>5-phospho-alpha-D-ribose 1-diphosphate</name>
        <dbReference type="ChEBI" id="CHEBI:58017"/>
    </ligand>
</feature>
<feature type="binding site" evidence="1">
    <location>
        <position position="69"/>
    </location>
    <ligand>
        <name>5-phospho-alpha-D-ribose 1-diphosphate</name>
        <dbReference type="ChEBI" id="CHEBI:58017"/>
    </ligand>
</feature>
<feature type="binding site" evidence="1">
    <location>
        <position position="69"/>
    </location>
    <ligand>
        <name>GMP</name>
        <dbReference type="ChEBI" id="CHEBI:58115"/>
    </ligand>
</feature>
<feature type="binding site" evidence="1">
    <location>
        <begin position="88"/>
        <end position="96"/>
    </location>
    <ligand>
        <name>5-phospho-alpha-D-ribose 1-diphosphate</name>
        <dbReference type="ChEBI" id="CHEBI:58017"/>
    </ligand>
</feature>
<feature type="binding site" evidence="1">
    <location>
        <position position="89"/>
    </location>
    <ligand>
        <name>Mg(2+)</name>
        <dbReference type="ChEBI" id="CHEBI:18420"/>
    </ligand>
</feature>
<feature type="binding site" evidence="1">
    <location>
        <begin position="92"/>
        <end position="96"/>
    </location>
    <ligand>
        <name>GMP</name>
        <dbReference type="ChEBI" id="CHEBI:58115"/>
    </ligand>
</feature>
<feature type="binding site" evidence="1">
    <location>
        <position position="92"/>
    </location>
    <ligand>
        <name>guanine</name>
        <dbReference type="ChEBI" id="CHEBI:16235"/>
    </ligand>
</feature>
<feature type="binding site" evidence="1">
    <location>
        <position position="92"/>
    </location>
    <ligand>
        <name>xanthine</name>
        <dbReference type="ChEBI" id="CHEBI:17712"/>
    </ligand>
</feature>
<feature type="binding site" evidence="1">
    <location>
        <begin position="134"/>
        <end position="135"/>
    </location>
    <ligand>
        <name>GMP</name>
        <dbReference type="ChEBI" id="CHEBI:58115"/>
    </ligand>
</feature>
<feature type="binding site" evidence="1">
    <location>
        <position position="135"/>
    </location>
    <ligand>
        <name>guanine</name>
        <dbReference type="ChEBI" id="CHEBI:16235"/>
    </ligand>
</feature>
<feature type="binding site" evidence="1">
    <location>
        <position position="135"/>
    </location>
    <ligand>
        <name>xanthine</name>
        <dbReference type="ChEBI" id="CHEBI:17712"/>
    </ligand>
</feature>
<keyword id="KW-0997">Cell inner membrane</keyword>
<keyword id="KW-1003">Cell membrane</keyword>
<keyword id="KW-0328">Glycosyltransferase</keyword>
<keyword id="KW-0460">Magnesium</keyword>
<keyword id="KW-0472">Membrane</keyword>
<keyword id="KW-0479">Metal-binding</keyword>
<keyword id="KW-0660">Purine salvage</keyword>
<keyword id="KW-0808">Transferase</keyword>
<evidence type="ECO:0000255" key="1">
    <source>
        <dbReference type="HAMAP-Rule" id="MF_01903"/>
    </source>
</evidence>
<organism>
    <name type="scientific">Yersinia pestis bv. Antiqua (strain Nepal516)</name>
    <dbReference type="NCBI Taxonomy" id="377628"/>
    <lineage>
        <taxon>Bacteria</taxon>
        <taxon>Pseudomonadati</taxon>
        <taxon>Pseudomonadota</taxon>
        <taxon>Gammaproteobacteria</taxon>
        <taxon>Enterobacterales</taxon>
        <taxon>Yersiniaceae</taxon>
        <taxon>Yersinia</taxon>
    </lineage>
</organism>
<proteinExistence type="inferred from homology"/>
<reference key="1">
    <citation type="journal article" date="2006" name="J. Bacteriol.">
        <title>Complete genome sequence of Yersinia pestis strains Antiqua and Nepal516: evidence of gene reduction in an emerging pathogen.</title>
        <authorList>
            <person name="Chain P.S.G."/>
            <person name="Hu P."/>
            <person name="Malfatti S.A."/>
            <person name="Radnedge L."/>
            <person name="Larimer F."/>
            <person name="Vergez L.M."/>
            <person name="Worsham P."/>
            <person name="Chu M.C."/>
            <person name="Andersen G.L."/>
        </authorList>
    </citation>
    <scope>NUCLEOTIDE SEQUENCE [LARGE SCALE GENOMIC DNA]</scope>
    <source>
        <strain>Nepal516</strain>
    </source>
</reference>
<reference key="2">
    <citation type="submission" date="2009-04" db="EMBL/GenBank/DDBJ databases">
        <title>Yersinia pestis Nepal516A whole genome shotgun sequencing project.</title>
        <authorList>
            <person name="Plunkett G. III"/>
            <person name="Anderson B.D."/>
            <person name="Baumler D.J."/>
            <person name="Burland V."/>
            <person name="Cabot E.L."/>
            <person name="Glasner J.D."/>
            <person name="Mau B."/>
            <person name="Neeno-Eckwall E."/>
            <person name="Perna N.T."/>
            <person name="Munk A.C."/>
            <person name="Tapia R."/>
            <person name="Green L.D."/>
            <person name="Rogers Y.C."/>
            <person name="Detter J.C."/>
            <person name="Bruce D.C."/>
            <person name="Brettin T.S."/>
        </authorList>
    </citation>
    <scope>NUCLEOTIDE SEQUENCE [LARGE SCALE GENOMIC DNA]</scope>
    <source>
        <strain>Nepal516</strain>
    </source>
</reference>
<name>XGPT_YERPN</name>
<comment type="function">
    <text evidence="1">Purine salvage pathway enzyme that catalyzes the transfer of the ribosyl-5-phosphate group from 5-phospho-alpha-D-ribose 1-diphosphate (PRPP) to the N9 position of the 6-oxopurines guanine and xanthine to form the corresponding ribonucleotides GMP (guanosine 5'-monophosphate) and XMP (xanthosine 5'-monophosphate), with the release of PPi. To a lesser extent, also acts on hypoxanthine.</text>
</comment>
<comment type="catalytic activity">
    <reaction evidence="1">
        <text>GMP + diphosphate = guanine + 5-phospho-alpha-D-ribose 1-diphosphate</text>
        <dbReference type="Rhea" id="RHEA:25424"/>
        <dbReference type="ChEBI" id="CHEBI:16235"/>
        <dbReference type="ChEBI" id="CHEBI:33019"/>
        <dbReference type="ChEBI" id="CHEBI:58017"/>
        <dbReference type="ChEBI" id="CHEBI:58115"/>
    </reaction>
    <physiologicalReaction direction="right-to-left" evidence="1">
        <dbReference type="Rhea" id="RHEA:25426"/>
    </physiologicalReaction>
</comment>
<comment type="catalytic activity">
    <reaction evidence="1">
        <text>XMP + diphosphate = xanthine + 5-phospho-alpha-D-ribose 1-diphosphate</text>
        <dbReference type="Rhea" id="RHEA:10800"/>
        <dbReference type="ChEBI" id="CHEBI:17712"/>
        <dbReference type="ChEBI" id="CHEBI:33019"/>
        <dbReference type="ChEBI" id="CHEBI:57464"/>
        <dbReference type="ChEBI" id="CHEBI:58017"/>
        <dbReference type="EC" id="2.4.2.22"/>
    </reaction>
    <physiologicalReaction direction="right-to-left" evidence="1">
        <dbReference type="Rhea" id="RHEA:10802"/>
    </physiologicalReaction>
</comment>
<comment type="catalytic activity">
    <reaction evidence="1">
        <text>IMP + diphosphate = hypoxanthine + 5-phospho-alpha-D-ribose 1-diphosphate</text>
        <dbReference type="Rhea" id="RHEA:17973"/>
        <dbReference type="ChEBI" id="CHEBI:17368"/>
        <dbReference type="ChEBI" id="CHEBI:33019"/>
        <dbReference type="ChEBI" id="CHEBI:58017"/>
        <dbReference type="ChEBI" id="CHEBI:58053"/>
    </reaction>
    <physiologicalReaction direction="right-to-left" evidence="1">
        <dbReference type="Rhea" id="RHEA:17975"/>
    </physiologicalReaction>
</comment>
<comment type="cofactor">
    <cofactor evidence="1">
        <name>Mg(2+)</name>
        <dbReference type="ChEBI" id="CHEBI:18420"/>
    </cofactor>
</comment>
<comment type="pathway">
    <text evidence="1">Purine metabolism; GMP biosynthesis via salvage pathway; GMP from guanine: step 1/1.</text>
</comment>
<comment type="pathway">
    <text evidence="1">Purine metabolism; XMP biosynthesis via salvage pathway; XMP from xanthine: step 1/1.</text>
</comment>
<comment type="subunit">
    <text evidence="1">Homotetramer.</text>
</comment>
<comment type="subcellular location">
    <subcellularLocation>
        <location evidence="1">Cell inner membrane</location>
        <topology evidence="1">Peripheral membrane protein</topology>
    </subcellularLocation>
</comment>
<comment type="similarity">
    <text evidence="1">Belongs to the purine/pyrimidine phosphoribosyltransferase family. XGPT subfamily.</text>
</comment>
<protein>
    <recommendedName>
        <fullName evidence="1">Xanthine-guanine phosphoribosyltransferase</fullName>
        <shortName evidence="1">XGPRT</shortName>
        <ecNumber evidence="1">2.4.2.-</ecNumber>
        <ecNumber evidence="1">2.4.2.22</ecNumber>
    </recommendedName>
    <alternativeName>
        <fullName evidence="1">Xanthine phosphoribosyltransferase</fullName>
    </alternativeName>
</protein>
<dbReference type="EC" id="2.4.2.-" evidence="1"/>
<dbReference type="EC" id="2.4.2.22" evidence="1"/>
<dbReference type="EMBL" id="CP000305">
    <property type="protein sequence ID" value="ABG17200.1"/>
    <property type="molecule type" value="Genomic_DNA"/>
</dbReference>
<dbReference type="EMBL" id="ACNQ01000008">
    <property type="protein sequence ID" value="EEO77280.1"/>
    <property type="molecule type" value="Genomic_DNA"/>
</dbReference>
<dbReference type="RefSeq" id="WP_002208704.1">
    <property type="nucleotide sequence ID" value="NZ_ACNQ01000008.1"/>
</dbReference>
<dbReference type="SMR" id="Q1CLD0"/>
<dbReference type="GeneID" id="57975493"/>
<dbReference type="KEGG" id="ypn:YPN_0868"/>
<dbReference type="HOGENOM" id="CLU_080904_3_0_6"/>
<dbReference type="UniPathway" id="UPA00602">
    <property type="reaction ID" value="UER00658"/>
</dbReference>
<dbReference type="UniPathway" id="UPA00909">
    <property type="reaction ID" value="UER00887"/>
</dbReference>
<dbReference type="Proteomes" id="UP000008936">
    <property type="component" value="Chromosome"/>
</dbReference>
<dbReference type="GO" id="GO:0005829">
    <property type="term" value="C:cytosol"/>
    <property type="evidence" value="ECO:0007669"/>
    <property type="project" value="TreeGrafter"/>
</dbReference>
<dbReference type="GO" id="GO:0005886">
    <property type="term" value="C:plasma membrane"/>
    <property type="evidence" value="ECO:0007669"/>
    <property type="project" value="UniProtKB-SubCell"/>
</dbReference>
<dbReference type="GO" id="GO:0052657">
    <property type="term" value="F:guanine phosphoribosyltransferase activity"/>
    <property type="evidence" value="ECO:0007669"/>
    <property type="project" value="RHEA"/>
</dbReference>
<dbReference type="GO" id="GO:0004422">
    <property type="term" value="F:hypoxanthine phosphoribosyltransferase activity"/>
    <property type="evidence" value="ECO:0007669"/>
    <property type="project" value="TreeGrafter"/>
</dbReference>
<dbReference type="GO" id="GO:0000287">
    <property type="term" value="F:magnesium ion binding"/>
    <property type="evidence" value="ECO:0007669"/>
    <property type="project" value="UniProtKB-UniRule"/>
</dbReference>
<dbReference type="GO" id="GO:0000310">
    <property type="term" value="F:xanthine phosphoribosyltransferase activity"/>
    <property type="evidence" value="ECO:0007669"/>
    <property type="project" value="UniProtKB-UniRule"/>
</dbReference>
<dbReference type="GO" id="GO:0032263">
    <property type="term" value="P:GMP salvage"/>
    <property type="evidence" value="ECO:0007669"/>
    <property type="project" value="UniProtKB-UniRule"/>
</dbReference>
<dbReference type="GO" id="GO:0032264">
    <property type="term" value="P:IMP salvage"/>
    <property type="evidence" value="ECO:0007669"/>
    <property type="project" value="TreeGrafter"/>
</dbReference>
<dbReference type="GO" id="GO:0006166">
    <property type="term" value="P:purine ribonucleoside salvage"/>
    <property type="evidence" value="ECO:0007669"/>
    <property type="project" value="UniProtKB-KW"/>
</dbReference>
<dbReference type="GO" id="GO:0032265">
    <property type="term" value="P:XMP salvage"/>
    <property type="evidence" value="ECO:0007669"/>
    <property type="project" value="UniProtKB-UniRule"/>
</dbReference>
<dbReference type="CDD" id="cd06223">
    <property type="entry name" value="PRTases_typeI"/>
    <property type="match status" value="1"/>
</dbReference>
<dbReference type="FunFam" id="3.40.50.2020:FF:000009">
    <property type="entry name" value="Xanthine phosphoribosyltransferase"/>
    <property type="match status" value="1"/>
</dbReference>
<dbReference type="Gene3D" id="3.40.50.2020">
    <property type="match status" value="1"/>
</dbReference>
<dbReference type="HAMAP" id="MF_01903">
    <property type="entry name" value="XGPRT"/>
    <property type="match status" value="1"/>
</dbReference>
<dbReference type="InterPro" id="IPR000836">
    <property type="entry name" value="PRibTrfase_dom"/>
</dbReference>
<dbReference type="InterPro" id="IPR029057">
    <property type="entry name" value="PRTase-like"/>
</dbReference>
<dbReference type="InterPro" id="IPR023747">
    <property type="entry name" value="Xanthine_Guanine_PRibTrfase"/>
</dbReference>
<dbReference type="NCBIfam" id="NF006613">
    <property type="entry name" value="PRK09177.1"/>
    <property type="match status" value="1"/>
</dbReference>
<dbReference type="PANTHER" id="PTHR39563">
    <property type="entry name" value="XANTHINE PHOSPHORIBOSYLTRANSFERASE"/>
    <property type="match status" value="1"/>
</dbReference>
<dbReference type="PANTHER" id="PTHR39563:SF1">
    <property type="entry name" value="XANTHINE-GUANINE PHOSPHORIBOSYLTRANSFERASE"/>
    <property type="match status" value="1"/>
</dbReference>
<dbReference type="Pfam" id="PF00156">
    <property type="entry name" value="Pribosyltran"/>
    <property type="match status" value="1"/>
</dbReference>
<dbReference type="SUPFAM" id="SSF53271">
    <property type="entry name" value="PRTase-like"/>
    <property type="match status" value="1"/>
</dbReference>
<dbReference type="PROSITE" id="PS00103">
    <property type="entry name" value="PUR_PYR_PR_TRANSFER"/>
    <property type="match status" value="1"/>
</dbReference>
<accession>Q1CLD0</accession>
<accession>C4GQD9</accession>
<sequence length="152" mass="16966">MNEKYVVTWDMLQIHARKLAQRLLPAEQWKGIIAVSRGGLVPAGILARELGIRYVDTVCISSYDHDNQRDLKVLKRAEGDGEGFIVIDDLVDTGGTATAIREMYPKAHFVTIFAKPAGRPLVDDYVVDIPQNTWIEQPWDMAVTFVAPLSGK</sequence>